<organism>
    <name type="scientific">Neisseria meningitidis serogroup A / serotype 4A (strain DSM 15465 / Z2491)</name>
    <dbReference type="NCBI Taxonomy" id="122587"/>
    <lineage>
        <taxon>Bacteria</taxon>
        <taxon>Pseudomonadati</taxon>
        <taxon>Pseudomonadota</taxon>
        <taxon>Betaproteobacteria</taxon>
        <taxon>Neisseriales</taxon>
        <taxon>Neisseriaceae</taxon>
        <taxon>Neisseria</taxon>
    </lineage>
</organism>
<accession>Q9JW39</accession>
<accession>A1IQ09</accession>
<evidence type="ECO:0000255" key="1">
    <source>
        <dbReference type="HAMAP-Rule" id="MF_00049"/>
    </source>
</evidence>
<reference key="1">
    <citation type="journal article" date="2000" name="Nature">
        <title>Complete DNA sequence of a serogroup A strain of Neisseria meningitidis Z2491.</title>
        <authorList>
            <person name="Parkhill J."/>
            <person name="Achtman M."/>
            <person name="James K.D."/>
            <person name="Bentley S.D."/>
            <person name="Churcher C.M."/>
            <person name="Klee S.R."/>
            <person name="Morelli G."/>
            <person name="Basham D."/>
            <person name="Brown D."/>
            <person name="Chillingworth T."/>
            <person name="Davies R.M."/>
            <person name="Davis P."/>
            <person name="Devlin K."/>
            <person name="Feltwell T."/>
            <person name="Hamlin N."/>
            <person name="Holroyd S."/>
            <person name="Jagels K."/>
            <person name="Leather S."/>
            <person name="Moule S."/>
            <person name="Mungall K.L."/>
            <person name="Quail M.A."/>
            <person name="Rajandream M.A."/>
            <person name="Rutherford K.M."/>
            <person name="Simmonds M."/>
            <person name="Skelton J."/>
            <person name="Whitehead S."/>
            <person name="Spratt B.G."/>
            <person name="Barrell B.G."/>
        </authorList>
    </citation>
    <scope>NUCLEOTIDE SEQUENCE [LARGE SCALE GENOMIC DNA]</scope>
    <source>
        <strain>DSM 15465 / Z2491</strain>
    </source>
</reference>
<sequence>MQEQYQPAAIEPAAQKKWDDARIFNVSEDASKPKYYCLSMFPYPSGKLHMGHVRNYTIGDVLSRFKLLNGFNVMQPMGWDAFGMPAENAAMKNNVAPAAWTYDNIEYMKTQLKSLGFAIDWARETATCKPEYYRWEQWLFTKLFEKGIVYRKNGTVNWDPVDQTVLANEQVIDGRGWRSGALIEKREIPMYYFKITDYAEELLNDLDKLEHWPEQVKTMQRNWIGKSRGMTVRFAVSDDSKQGLEGDYAKFLQVYTTRPDTLMGATYVAVAAEHPLATAAAADKPELQAFIAECKAGSVAEADMATMEKKGVPTGRYVVNPLNGDKLEVWIANYVLWGYGDGAVMAVPAHDERDFEFAAKYSLPKKQVLQRVTIGLSPEQEEAMGFGGGSGCGAGYGDGSGSDSRDLPFMPNKWQAWYGVKDDFMVLINSGELDGMNYQTAFDAVAAKLQAIGAGEPKTQYRLRDWGISRQRYWGCPIPIVHCEQCGDVPVPADQLPVVLPENVVPDGMGSPLAKMPEFYETTCPCCGGAAKRETDTMDTFMESSWYFFRYMSPKFSDGMVDPAAAKYWGAVDQYIGGIEHAILHLLYARFFTKLMRDEGLVNVDEPFERLLTQGMVVCETYYRENDKGGKDWINPADVELTFDDKGRPVSAVLKVDGLPVVISGTEKMSKSKNNGVDPQELINAYGADTARLFMMFAAPPEQSLEWSDSGVEGAHRFLRRLWRTVYEYLKQGEAVNAFAGSQDGLSKELKDLRHKLHSTIAKVSDDYGRRQQFNTAIAAVMELLNQYDKTDTGSEQGRTVAQEVLEAAVRLLWPIVPHICETLWSELNGAKLWEAGWPAVDEAALVKSEIEVMVQVNGKLRGKITVAADASKADLEAAALATEGAVKFMEGKPAKKIIVVPGRLVNIVV</sequence>
<gene>
    <name evidence="1" type="primary">leuS</name>
    <name type="ordered locus">NMA0559</name>
</gene>
<feature type="chain" id="PRO_0000152053" description="Leucine--tRNA ligase">
    <location>
        <begin position="1"/>
        <end position="910"/>
    </location>
</feature>
<feature type="short sequence motif" description="'HIGH' region">
    <location>
        <begin position="42"/>
        <end position="52"/>
    </location>
</feature>
<feature type="short sequence motif" description="'KMSKS' region">
    <location>
        <begin position="668"/>
        <end position="672"/>
    </location>
</feature>
<feature type="binding site" evidence="1">
    <location>
        <position position="671"/>
    </location>
    <ligand>
        <name>ATP</name>
        <dbReference type="ChEBI" id="CHEBI:30616"/>
    </ligand>
</feature>
<keyword id="KW-0030">Aminoacyl-tRNA synthetase</keyword>
<keyword id="KW-0067">ATP-binding</keyword>
<keyword id="KW-0963">Cytoplasm</keyword>
<keyword id="KW-0436">Ligase</keyword>
<keyword id="KW-0547">Nucleotide-binding</keyword>
<keyword id="KW-0648">Protein biosynthesis</keyword>
<comment type="catalytic activity">
    <reaction evidence="1">
        <text>tRNA(Leu) + L-leucine + ATP = L-leucyl-tRNA(Leu) + AMP + diphosphate</text>
        <dbReference type="Rhea" id="RHEA:11688"/>
        <dbReference type="Rhea" id="RHEA-COMP:9613"/>
        <dbReference type="Rhea" id="RHEA-COMP:9622"/>
        <dbReference type="ChEBI" id="CHEBI:30616"/>
        <dbReference type="ChEBI" id="CHEBI:33019"/>
        <dbReference type="ChEBI" id="CHEBI:57427"/>
        <dbReference type="ChEBI" id="CHEBI:78442"/>
        <dbReference type="ChEBI" id="CHEBI:78494"/>
        <dbReference type="ChEBI" id="CHEBI:456215"/>
        <dbReference type="EC" id="6.1.1.4"/>
    </reaction>
</comment>
<comment type="subcellular location">
    <subcellularLocation>
        <location evidence="1">Cytoplasm</location>
    </subcellularLocation>
</comment>
<comment type="similarity">
    <text evidence="1">Belongs to the class-I aminoacyl-tRNA synthetase family.</text>
</comment>
<protein>
    <recommendedName>
        <fullName evidence="1">Leucine--tRNA ligase</fullName>
        <ecNumber evidence="1">6.1.1.4</ecNumber>
    </recommendedName>
    <alternativeName>
        <fullName evidence="1">Leucyl-tRNA synthetase</fullName>
        <shortName evidence="1">LeuRS</shortName>
    </alternativeName>
</protein>
<proteinExistence type="inferred from homology"/>
<dbReference type="EC" id="6.1.1.4" evidence="1"/>
<dbReference type="EMBL" id="AL157959">
    <property type="protein sequence ID" value="CAM07834.1"/>
    <property type="molecule type" value="Genomic_DNA"/>
</dbReference>
<dbReference type="PIR" id="F81974">
    <property type="entry name" value="F81974"/>
</dbReference>
<dbReference type="RefSeq" id="WP_002246442.1">
    <property type="nucleotide sequence ID" value="NC_003116.1"/>
</dbReference>
<dbReference type="SMR" id="Q9JW39"/>
<dbReference type="EnsemblBacteria" id="CAM07834">
    <property type="protein sequence ID" value="CAM07834"/>
    <property type="gene ID" value="NMA0559"/>
</dbReference>
<dbReference type="KEGG" id="nma:NMA0559"/>
<dbReference type="HOGENOM" id="CLU_004427_0_0_4"/>
<dbReference type="Proteomes" id="UP000000626">
    <property type="component" value="Chromosome"/>
</dbReference>
<dbReference type="GO" id="GO:0005829">
    <property type="term" value="C:cytosol"/>
    <property type="evidence" value="ECO:0007669"/>
    <property type="project" value="TreeGrafter"/>
</dbReference>
<dbReference type="GO" id="GO:0002161">
    <property type="term" value="F:aminoacyl-tRNA deacylase activity"/>
    <property type="evidence" value="ECO:0007669"/>
    <property type="project" value="InterPro"/>
</dbReference>
<dbReference type="GO" id="GO:0005524">
    <property type="term" value="F:ATP binding"/>
    <property type="evidence" value="ECO:0007669"/>
    <property type="project" value="UniProtKB-UniRule"/>
</dbReference>
<dbReference type="GO" id="GO:0004823">
    <property type="term" value="F:leucine-tRNA ligase activity"/>
    <property type="evidence" value="ECO:0007669"/>
    <property type="project" value="UniProtKB-UniRule"/>
</dbReference>
<dbReference type="GO" id="GO:0006429">
    <property type="term" value="P:leucyl-tRNA aminoacylation"/>
    <property type="evidence" value="ECO:0007669"/>
    <property type="project" value="UniProtKB-UniRule"/>
</dbReference>
<dbReference type="CDD" id="cd07958">
    <property type="entry name" value="Anticodon_Ia_Leu_BEm"/>
    <property type="match status" value="1"/>
</dbReference>
<dbReference type="CDD" id="cd00812">
    <property type="entry name" value="LeuRS_core"/>
    <property type="match status" value="1"/>
</dbReference>
<dbReference type="FunFam" id="1.10.730.10:FF:000003">
    <property type="entry name" value="Leucine--tRNA ligase"/>
    <property type="match status" value="1"/>
</dbReference>
<dbReference type="FunFam" id="2.20.28.290:FF:000001">
    <property type="entry name" value="Leucine--tRNA ligase"/>
    <property type="match status" value="1"/>
</dbReference>
<dbReference type="FunFam" id="3.10.20.590:FF:000001">
    <property type="entry name" value="Leucine--tRNA ligase"/>
    <property type="match status" value="1"/>
</dbReference>
<dbReference type="FunFam" id="3.40.50.620:FF:000003">
    <property type="entry name" value="Leucine--tRNA ligase"/>
    <property type="match status" value="1"/>
</dbReference>
<dbReference type="FunFam" id="3.40.50.620:FF:000124">
    <property type="entry name" value="Leucine--tRNA ligase"/>
    <property type="match status" value="1"/>
</dbReference>
<dbReference type="FunFam" id="3.90.740.10:FF:000012">
    <property type="entry name" value="Leucine--tRNA ligase"/>
    <property type="match status" value="1"/>
</dbReference>
<dbReference type="Gene3D" id="2.20.28.290">
    <property type="match status" value="1"/>
</dbReference>
<dbReference type="Gene3D" id="3.10.20.590">
    <property type="match status" value="1"/>
</dbReference>
<dbReference type="Gene3D" id="3.40.50.620">
    <property type="entry name" value="HUPs"/>
    <property type="match status" value="2"/>
</dbReference>
<dbReference type="Gene3D" id="1.10.730.10">
    <property type="entry name" value="Isoleucyl-tRNA Synthetase, Domain 1"/>
    <property type="match status" value="1"/>
</dbReference>
<dbReference type="Gene3D" id="3.90.740.10">
    <property type="entry name" value="Valyl/Leucyl/Isoleucyl-tRNA synthetase, editing domain"/>
    <property type="match status" value="1"/>
</dbReference>
<dbReference type="HAMAP" id="MF_00049_B">
    <property type="entry name" value="Leu_tRNA_synth_B"/>
    <property type="match status" value="1"/>
</dbReference>
<dbReference type="InterPro" id="IPR001412">
    <property type="entry name" value="aa-tRNA-synth_I_CS"/>
</dbReference>
<dbReference type="InterPro" id="IPR002300">
    <property type="entry name" value="aa-tRNA-synth_Ia"/>
</dbReference>
<dbReference type="InterPro" id="IPR002302">
    <property type="entry name" value="Leu-tRNA-ligase"/>
</dbReference>
<dbReference type="InterPro" id="IPR025709">
    <property type="entry name" value="Leu_tRNA-synth_edit"/>
</dbReference>
<dbReference type="InterPro" id="IPR013155">
    <property type="entry name" value="M/V/L/I-tRNA-synth_anticd-bd"/>
</dbReference>
<dbReference type="InterPro" id="IPR015413">
    <property type="entry name" value="Methionyl/Leucyl_tRNA_Synth"/>
</dbReference>
<dbReference type="InterPro" id="IPR014729">
    <property type="entry name" value="Rossmann-like_a/b/a_fold"/>
</dbReference>
<dbReference type="InterPro" id="IPR009080">
    <property type="entry name" value="tRNAsynth_Ia_anticodon-bd"/>
</dbReference>
<dbReference type="InterPro" id="IPR009008">
    <property type="entry name" value="Val/Leu/Ile-tRNA-synth_edit"/>
</dbReference>
<dbReference type="NCBIfam" id="TIGR00396">
    <property type="entry name" value="leuS_bact"/>
    <property type="match status" value="1"/>
</dbReference>
<dbReference type="PANTHER" id="PTHR43740:SF2">
    <property type="entry name" value="LEUCINE--TRNA LIGASE, MITOCHONDRIAL"/>
    <property type="match status" value="1"/>
</dbReference>
<dbReference type="PANTHER" id="PTHR43740">
    <property type="entry name" value="LEUCYL-TRNA SYNTHETASE"/>
    <property type="match status" value="1"/>
</dbReference>
<dbReference type="Pfam" id="PF08264">
    <property type="entry name" value="Anticodon_1"/>
    <property type="match status" value="1"/>
</dbReference>
<dbReference type="Pfam" id="PF00133">
    <property type="entry name" value="tRNA-synt_1"/>
    <property type="match status" value="2"/>
</dbReference>
<dbReference type="Pfam" id="PF13603">
    <property type="entry name" value="tRNA-synt_1_2"/>
    <property type="match status" value="1"/>
</dbReference>
<dbReference type="Pfam" id="PF09334">
    <property type="entry name" value="tRNA-synt_1g"/>
    <property type="match status" value="1"/>
</dbReference>
<dbReference type="PRINTS" id="PR00985">
    <property type="entry name" value="TRNASYNTHLEU"/>
</dbReference>
<dbReference type="SUPFAM" id="SSF47323">
    <property type="entry name" value="Anticodon-binding domain of a subclass of class I aminoacyl-tRNA synthetases"/>
    <property type="match status" value="1"/>
</dbReference>
<dbReference type="SUPFAM" id="SSF52374">
    <property type="entry name" value="Nucleotidylyl transferase"/>
    <property type="match status" value="1"/>
</dbReference>
<dbReference type="SUPFAM" id="SSF50677">
    <property type="entry name" value="ValRS/IleRS/LeuRS editing domain"/>
    <property type="match status" value="1"/>
</dbReference>
<dbReference type="PROSITE" id="PS00178">
    <property type="entry name" value="AA_TRNA_LIGASE_I"/>
    <property type="match status" value="1"/>
</dbReference>
<name>SYL_NEIMA</name>